<keyword id="KW-1003">Cell membrane</keyword>
<keyword id="KW-0406">Ion transport</keyword>
<keyword id="KW-0472">Membrane</keyword>
<keyword id="KW-0630">Potassium</keyword>
<keyword id="KW-0633">Potassium transport</keyword>
<keyword id="KW-0812">Transmembrane</keyword>
<keyword id="KW-1133">Transmembrane helix</keyword>
<keyword id="KW-0813">Transport</keyword>
<accession>A9VFM0</accession>
<organism>
    <name type="scientific">Bacillus mycoides (strain KBAB4)</name>
    <name type="common">Bacillus weihenstephanensis</name>
    <dbReference type="NCBI Taxonomy" id="315730"/>
    <lineage>
        <taxon>Bacteria</taxon>
        <taxon>Bacillati</taxon>
        <taxon>Bacillota</taxon>
        <taxon>Bacilli</taxon>
        <taxon>Bacillales</taxon>
        <taxon>Bacillaceae</taxon>
        <taxon>Bacillus</taxon>
        <taxon>Bacillus cereus group</taxon>
    </lineage>
</organism>
<protein>
    <recommendedName>
        <fullName evidence="1">Potassium-transporting ATPase potassium-binding subunit</fullName>
    </recommendedName>
    <alternativeName>
        <fullName evidence="1">ATP phosphohydrolase [potassium-transporting] A chain</fullName>
    </alternativeName>
    <alternativeName>
        <fullName evidence="1">Potassium-binding and translocating subunit A</fullName>
    </alternativeName>
    <alternativeName>
        <fullName evidence="1">Potassium-translocating ATPase A chain</fullName>
    </alternativeName>
</protein>
<name>KDPA_BACMK</name>
<feature type="chain" id="PRO_1000114673" description="Potassium-transporting ATPase potassium-binding subunit">
    <location>
        <begin position="1"/>
        <end position="555"/>
    </location>
</feature>
<feature type="transmembrane region" description="Helical" evidence="1">
    <location>
        <begin position="2"/>
        <end position="22"/>
    </location>
</feature>
<feature type="transmembrane region" description="Helical" evidence="1">
    <location>
        <begin position="60"/>
        <end position="80"/>
    </location>
</feature>
<feature type="transmembrane region" description="Helical" evidence="1">
    <location>
        <begin position="130"/>
        <end position="150"/>
    </location>
</feature>
<feature type="transmembrane region" description="Helical" evidence="1">
    <location>
        <begin position="173"/>
        <end position="193"/>
    </location>
</feature>
<feature type="transmembrane region" description="Helical" evidence="1">
    <location>
        <begin position="246"/>
        <end position="266"/>
    </location>
</feature>
<feature type="transmembrane region" description="Helical" evidence="1">
    <location>
        <begin position="278"/>
        <end position="298"/>
    </location>
</feature>
<feature type="transmembrane region" description="Helical" evidence="1">
    <location>
        <begin position="374"/>
        <end position="394"/>
    </location>
</feature>
<feature type="transmembrane region" description="Helical" evidence="1">
    <location>
        <begin position="412"/>
        <end position="432"/>
    </location>
</feature>
<feature type="transmembrane region" description="Helical" evidence="1">
    <location>
        <begin position="483"/>
        <end position="503"/>
    </location>
</feature>
<feature type="transmembrane region" description="Helical" evidence="1">
    <location>
        <begin position="525"/>
        <end position="545"/>
    </location>
</feature>
<proteinExistence type="inferred from homology"/>
<sequence length="555" mass="59709">MIWVAVVITMLLFILVAKPTGIYLEKAFQGSKKLDKVFGPFEKLIFKITGVKGYNQTWKQYALSLVLLNGFMIVVVYFIFRLQGVLPLNPAHIEGMEPTLAFNTAISFMADTNLQHYSGENGLSYLSQLIGITFLMFAAPATTLAIVMAFIRGLAGKELGNFFVDFTRALTRVFLPIAFIAALVFVALGVPQTLDGAVTAQTIDGAKQSILRGPVASFVSIKELGNNGGGFFGANSTHPFENPGQMSNILQMMLMMLLPTALPFTYGRMVGNKKQGRILFVSLFMVFLLGFITITTSELHGNPVLNGMGIEHVQGSTEGKEVRFGTVFSSLYATVTTAAETGAVNTMHDTLTPIGGLVPLVNMMLNTVYGGVGAGFVNIIMYAIIAVFISGLMVGRTPEFLGKKIEGKEMKLIAVTILFHPLLILGFSALALSTSLGTDAISHSGFHGLTQVVYEYTSSAANNGSGFEGLGDNTPFWNITTGLVMFLGRYFSLITMLAVAASLKEKTVVPETVGTFRTDNGLFGGIFIGTIVIVGALTFFPMLVLGPIAEFLTLK</sequence>
<reference key="1">
    <citation type="journal article" date="2008" name="Chem. Biol. Interact.">
        <title>Extending the Bacillus cereus group genomics to putative food-borne pathogens of different toxicity.</title>
        <authorList>
            <person name="Lapidus A."/>
            <person name="Goltsman E."/>
            <person name="Auger S."/>
            <person name="Galleron N."/>
            <person name="Segurens B."/>
            <person name="Dossat C."/>
            <person name="Land M.L."/>
            <person name="Broussolle V."/>
            <person name="Brillard J."/>
            <person name="Guinebretiere M.-H."/>
            <person name="Sanchis V."/>
            <person name="Nguen-the C."/>
            <person name="Lereclus D."/>
            <person name="Richardson P."/>
            <person name="Wincker P."/>
            <person name="Weissenbach J."/>
            <person name="Ehrlich S.D."/>
            <person name="Sorokin A."/>
        </authorList>
    </citation>
    <scope>NUCLEOTIDE SEQUENCE [LARGE SCALE GENOMIC DNA]</scope>
    <source>
        <strain>KBAB4</strain>
    </source>
</reference>
<comment type="function">
    <text evidence="1">Part of the high-affinity ATP-driven potassium transport (or Kdp) system, which catalyzes the hydrolysis of ATP coupled with the electrogenic transport of potassium into the cytoplasm. This subunit binds the extracellular potassium ions and delivers the ions to the membrane domain of KdpB through an intramembrane tunnel.</text>
</comment>
<comment type="subunit">
    <text evidence="1">The system is composed of three essential subunits: KdpA, KdpB and KdpC.</text>
</comment>
<comment type="subcellular location">
    <subcellularLocation>
        <location evidence="1">Cell membrane</location>
        <topology evidence="1">Multi-pass membrane protein</topology>
    </subcellularLocation>
</comment>
<comment type="similarity">
    <text evidence="1">Belongs to the KdpA family.</text>
</comment>
<gene>
    <name evidence="1" type="primary">kdpA</name>
    <name type="ordered locus">BcerKBAB4_0654</name>
</gene>
<dbReference type="EMBL" id="CP000903">
    <property type="protein sequence ID" value="ABY41916.1"/>
    <property type="molecule type" value="Genomic_DNA"/>
</dbReference>
<dbReference type="RefSeq" id="WP_012260341.1">
    <property type="nucleotide sequence ID" value="NC_010184.1"/>
</dbReference>
<dbReference type="SMR" id="A9VFM0"/>
<dbReference type="KEGG" id="bwe:BcerKBAB4_0654"/>
<dbReference type="eggNOG" id="COG2060">
    <property type="taxonomic scope" value="Bacteria"/>
</dbReference>
<dbReference type="HOGENOM" id="CLU_018614_3_0_9"/>
<dbReference type="Proteomes" id="UP000002154">
    <property type="component" value="Chromosome"/>
</dbReference>
<dbReference type="GO" id="GO:0005886">
    <property type="term" value="C:plasma membrane"/>
    <property type="evidence" value="ECO:0007669"/>
    <property type="project" value="UniProtKB-SubCell"/>
</dbReference>
<dbReference type="GO" id="GO:0008556">
    <property type="term" value="F:P-type potassium transmembrane transporter activity"/>
    <property type="evidence" value="ECO:0007669"/>
    <property type="project" value="InterPro"/>
</dbReference>
<dbReference type="GO" id="GO:0030955">
    <property type="term" value="F:potassium ion binding"/>
    <property type="evidence" value="ECO:0007669"/>
    <property type="project" value="UniProtKB-UniRule"/>
</dbReference>
<dbReference type="HAMAP" id="MF_00275">
    <property type="entry name" value="KdpA"/>
    <property type="match status" value="1"/>
</dbReference>
<dbReference type="InterPro" id="IPR004623">
    <property type="entry name" value="KdpA"/>
</dbReference>
<dbReference type="NCBIfam" id="TIGR00680">
    <property type="entry name" value="kdpA"/>
    <property type="match status" value="1"/>
</dbReference>
<dbReference type="PANTHER" id="PTHR30607">
    <property type="entry name" value="POTASSIUM-TRANSPORTING ATPASE A CHAIN"/>
    <property type="match status" value="1"/>
</dbReference>
<dbReference type="PANTHER" id="PTHR30607:SF2">
    <property type="entry name" value="POTASSIUM-TRANSPORTING ATPASE POTASSIUM-BINDING SUBUNIT"/>
    <property type="match status" value="1"/>
</dbReference>
<dbReference type="Pfam" id="PF03814">
    <property type="entry name" value="KdpA"/>
    <property type="match status" value="1"/>
</dbReference>
<dbReference type="PIRSF" id="PIRSF001294">
    <property type="entry name" value="K_ATPaseA"/>
    <property type="match status" value="1"/>
</dbReference>
<evidence type="ECO:0000255" key="1">
    <source>
        <dbReference type="HAMAP-Rule" id="MF_00275"/>
    </source>
</evidence>